<accession>A1BJ56</accession>
<protein>
    <recommendedName>
        <fullName evidence="1">GTPase Obg</fullName>
        <ecNumber evidence="1">3.6.5.-</ecNumber>
    </recommendedName>
    <alternativeName>
        <fullName evidence="1">GTP-binding protein Obg</fullName>
    </alternativeName>
</protein>
<evidence type="ECO:0000255" key="1">
    <source>
        <dbReference type="HAMAP-Rule" id="MF_01454"/>
    </source>
</evidence>
<evidence type="ECO:0000255" key="2">
    <source>
        <dbReference type="PROSITE-ProRule" id="PRU01231"/>
    </source>
</evidence>
<gene>
    <name evidence="1" type="primary">obg</name>
    <name type="ordered locus">Cpha266_2445</name>
</gene>
<sequence>MKFVDSATISIQAGDGGRGCVSFRREKFVPKGGPDGGDGGRGGHIYLRANKQLATLLDFRYRKQYLATRGAHGQGSRKTGKDGSDIVIEIPCGTLVKNAQTHELIADLTEDGQEMLVARGGKGGRGNQHFATPTRQAPRYAEPGLKGEAFELEMELKLMADVGLVGFPNAGKSTLISVLSAAKPKIADYPFTTLVPNLGIVRYEEYKSFVMADIPGIIEGAAEGKGLGLQFLRHIERTKILVVLVAADAADIALEYQTLVQELEKFDSGLLLKPRIAVITKMDIASEDMVVPELEGVKLLMISSVTGKGLKELKDELWRQVSTCSRSEDQPLDEHLG</sequence>
<organism>
    <name type="scientific">Chlorobium phaeobacteroides (strain DSM 266 / SMG 266 / 2430)</name>
    <dbReference type="NCBI Taxonomy" id="290317"/>
    <lineage>
        <taxon>Bacteria</taxon>
        <taxon>Pseudomonadati</taxon>
        <taxon>Chlorobiota</taxon>
        <taxon>Chlorobiia</taxon>
        <taxon>Chlorobiales</taxon>
        <taxon>Chlorobiaceae</taxon>
        <taxon>Chlorobium/Pelodictyon group</taxon>
        <taxon>Chlorobium</taxon>
    </lineage>
</organism>
<reference key="1">
    <citation type="submission" date="2006-12" db="EMBL/GenBank/DDBJ databases">
        <title>Complete sequence of Chlorobium phaeobacteroides DSM 266.</title>
        <authorList>
            <consortium name="US DOE Joint Genome Institute"/>
            <person name="Copeland A."/>
            <person name="Lucas S."/>
            <person name="Lapidus A."/>
            <person name="Barry K."/>
            <person name="Detter J.C."/>
            <person name="Glavina del Rio T."/>
            <person name="Hammon N."/>
            <person name="Israni S."/>
            <person name="Pitluck S."/>
            <person name="Goltsman E."/>
            <person name="Schmutz J."/>
            <person name="Larimer F."/>
            <person name="Land M."/>
            <person name="Hauser L."/>
            <person name="Mikhailova N."/>
            <person name="Li T."/>
            <person name="Overmann J."/>
            <person name="Bryant D.A."/>
            <person name="Richardson P."/>
        </authorList>
    </citation>
    <scope>NUCLEOTIDE SEQUENCE [LARGE SCALE GENOMIC DNA]</scope>
    <source>
        <strain>DSM 266 / SMG 266 / 2430</strain>
    </source>
</reference>
<name>OBG_CHLPD</name>
<feature type="chain" id="PRO_0000385826" description="GTPase Obg">
    <location>
        <begin position="1"/>
        <end position="337"/>
    </location>
</feature>
<feature type="domain" description="Obg" evidence="2">
    <location>
        <begin position="1"/>
        <end position="159"/>
    </location>
</feature>
<feature type="domain" description="OBG-type G" evidence="1">
    <location>
        <begin position="160"/>
        <end position="322"/>
    </location>
</feature>
<feature type="binding site" evidence="1">
    <location>
        <begin position="166"/>
        <end position="173"/>
    </location>
    <ligand>
        <name>GTP</name>
        <dbReference type="ChEBI" id="CHEBI:37565"/>
    </ligand>
</feature>
<feature type="binding site" evidence="1">
    <location>
        <position position="173"/>
    </location>
    <ligand>
        <name>Mg(2+)</name>
        <dbReference type="ChEBI" id="CHEBI:18420"/>
    </ligand>
</feature>
<feature type="binding site" evidence="1">
    <location>
        <begin position="191"/>
        <end position="195"/>
    </location>
    <ligand>
        <name>GTP</name>
        <dbReference type="ChEBI" id="CHEBI:37565"/>
    </ligand>
</feature>
<feature type="binding site" evidence="1">
    <location>
        <position position="193"/>
    </location>
    <ligand>
        <name>Mg(2+)</name>
        <dbReference type="ChEBI" id="CHEBI:18420"/>
    </ligand>
</feature>
<feature type="binding site" evidence="1">
    <location>
        <begin position="213"/>
        <end position="216"/>
    </location>
    <ligand>
        <name>GTP</name>
        <dbReference type="ChEBI" id="CHEBI:37565"/>
    </ligand>
</feature>
<feature type="binding site" evidence="1">
    <location>
        <begin position="280"/>
        <end position="283"/>
    </location>
    <ligand>
        <name>GTP</name>
        <dbReference type="ChEBI" id="CHEBI:37565"/>
    </ligand>
</feature>
<feature type="binding site" evidence="1">
    <location>
        <begin position="303"/>
        <end position="305"/>
    </location>
    <ligand>
        <name>GTP</name>
        <dbReference type="ChEBI" id="CHEBI:37565"/>
    </ligand>
</feature>
<comment type="function">
    <text evidence="1">An essential GTPase which binds GTP, GDP and possibly (p)ppGpp with moderate affinity, with high nucleotide exchange rates and a fairly low GTP hydrolysis rate. Plays a role in control of the cell cycle, stress response, ribosome biogenesis and in those bacteria that undergo differentiation, in morphogenesis control.</text>
</comment>
<comment type="cofactor">
    <cofactor evidence="1">
        <name>Mg(2+)</name>
        <dbReference type="ChEBI" id="CHEBI:18420"/>
    </cofactor>
</comment>
<comment type="subunit">
    <text evidence="1">Monomer.</text>
</comment>
<comment type="subcellular location">
    <subcellularLocation>
        <location evidence="1">Cytoplasm</location>
    </subcellularLocation>
</comment>
<comment type="similarity">
    <text evidence="1">Belongs to the TRAFAC class OBG-HflX-like GTPase superfamily. OBG GTPase family.</text>
</comment>
<dbReference type="EC" id="3.6.5.-" evidence="1"/>
<dbReference type="EMBL" id="CP000492">
    <property type="protein sequence ID" value="ABL66433.1"/>
    <property type="molecule type" value="Genomic_DNA"/>
</dbReference>
<dbReference type="RefSeq" id="WP_011746215.1">
    <property type="nucleotide sequence ID" value="NC_008639.1"/>
</dbReference>
<dbReference type="SMR" id="A1BJ56"/>
<dbReference type="STRING" id="290317.Cpha266_2445"/>
<dbReference type="KEGG" id="cph:Cpha266_2445"/>
<dbReference type="eggNOG" id="COG0536">
    <property type="taxonomic scope" value="Bacteria"/>
</dbReference>
<dbReference type="HOGENOM" id="CLU_011747_2_0_10"/>
<dbReference type="OrthoDB" id="9807318at2"/>
<dbReference type="Proteomes" id="UP000008701">
    <property type="component" value="Chromosome"/>
</dbReference>
<dbReference type="GO" id="GO:0005737">
    <property type="term" value="C:cytoplasm"/>
    <property type="evidence" value="ECO:0007669"/>
    <property type="project" value="UniProtKB-SubCell"/>
</dbReference>
<dbReference type="GO" id="GO:0005525">
    <property type="term" value="F:GTP binding"/>
    <property type="evidence" value="ECO:0007669"/>
    <property type="project" value="UniProtKB-UniRule"/>
</dbReference>
<dbReference type="GO" id="GO:0003924">
    <property type="term" value="F:GTPase activity"/>
    <property type="evidence" value="ECO:0007669"/>
    <property type="project" value="UniProtKB-UniRule"/>
</dbReference>
<dbReference type="GO" id="GO:0000287">
    <property type="term" value="F:magnesium ion binding"/>
    <property type="evidence" value="ECO:0007669"/>
    <property type="project" value="InterPro"/>
</dbReference>
<dbReference type="GO" id="GO:0042254">
    <property type="term" value="P:ribosome biogenesis"/>
    <property type="evidence" value="ECO:0007669"/>
    <property type="project" value="UniProtKB-UniRule"/>
</dbReference>
<dbReference type="CDD" id="cd01898">
    <property type="entry name" value="Obg"/>
    <property type="match status" value="1"/>
</dbReference>
<dbReference type="FunFam" id="2.70.210.12:FF:000001">
    <property type="entry name" value="GTPase Obg"/>
    <property type="match status" value="1"/>
</dbReference>
<dbReference type="Gene3D" id="2.70.210.12">
    <property type="entry name" value="GTP1/OBG domain"/>
    <property type="match status" value="1"/>
</dbReference>
<dbReference type="Gene3D" id="3.40.50.300">
    <property type="entry name" value="P-loop containing nucleotide triphosphate hydrolases"/>
    <property type="match status" value="1"/>
</dbReference>
<dbReference type="HAMAP" id="MF_01454">
    <property type="entry name" value="GTPase_Obg"/>
    <property type="match status" value="1"/>
</dbReference>
<dbReference type="InterPro" id="IPR031167">
    <property type="entry name" value="G_OBG"/>
</dbReference>
<dbReference type="InterPro" id="IPR006073">
    <property type="entry name" value="GTP-bd"/>
</dbReference>
<dbReference type="InterPro" id="IPR014100">
    <property type="entry name" value="GTP-bd_Obg/CgtA"/>
</dbReference>
<dbReference type="InterPro" id="IPR006074">
    <property type="entry name" value="GTP1-OBG_CS"/>
</dbReference>
<dbReference type="InterPro" id="IPR006169">
    <property type="entry name" value="GTP1_OBG_dom"/>
</dbReference>
<dbReference type="InterPro" id="IPR036726">
    <property type="entry name" value="GTP1_OBG_dom_sf"/>
</dbReference>
<dbReference type="InterPro" id="IPR045086">
    <property type="entry name" value="OBG_GTPase"/>
</dbReference>
<dbReference type="InterPro" id="IPR027417">
    <property type="entry name" value="P-loop_NTPase"/>
</dbReference>
<dbReference type="NCBIfam" id="TIGR02729">
    <property type="entry name" value="Obg_CgtA"/>
    <property type="match status" value="1"/>
</dbReference>
<dbReference type="NCBIfam" id="NF008955">
    <property type="entry name" value="PRK12297.1"/>
    <property type="match status" value="1"/>
</dbReference>
<dbReference type="NCBIfam" id="NF008956">
    <property type="entry name" value="PRK12299.1"/>
    <property type="match status" value="1"/>
</dbReference>
<dbReference type="PANTHER" id="PTHR11702">
    <property type="entry name" value="DEVELOPMENTALLY REGULATED GTP-BINDING PROTEIN-RELATED"/>
    <property type="match status" value="1"/>
</dbReference>
<dbReference type="PANTHER" id="PTHR11702:SF31">
    <property type="entry name" value="MITOCHONDRIAL RIBOSOME-ASSOCIATED GTPASE 2"/>
    <property type="match status" value="1"/>
</dbReference>
<dbReference type="Pfam" id="PF01018">
    <property type="entry name" value="GTP1_OBG"/>
    <property type="match status" value="1"/>
</dbReference>
<dbReference type="Pfam" id="PF01926">
    <property type="entry name" value="MMR_HSR1"/>
    <property type="match status" value="1"/>
</dbReference>
<dbReference type="PIRSF" id="PIRSF002401">
    <property type="entry name" value="GTP_bd_Obg/CgtA"/>
    <property type="match status" value="1"/>
</dbReference>
<dbReference type="PRINTS" id="PR00326">
    <property type="entry name" value="GTP1OBG"/>
</dbReference>
<dbReference type="SUPFAM" id="SSF82051">
    <property type="entry name" value="Obg GTP-binding protein N-terminal domain"/>
    <property type="match status" value="1"/>
</dbReference>
<dbReference type="SUPFAM" id="SSF52540">
    <property type="entry name" value="P-loop containing nucleoside triphosphate hydrolases"/>
    <property type="match status" value="1"/>
</dbReference>
<dbReference type="PROSITE" id="PS51710">
    <property type="entry name" value="G_OBG"/>
    <property type="match status" value="1"/>
</dbReference>
<dbReference type="PROSITE" id="PS00905">
    <property type="entry name" value="GTP1_OBG"/>
    <property type="match status" value="1"/>
</dbReference>
<dbReference type="PROSITE" id="PS51883">
    <property type="entry name" value="OBG"/>
    <property type="match status" value="1"/>
</dbReference>
<keyword id="KW-0963">Cytoplasm</keyword>
<keyword id="KW-0342">GTP-binding</keyword>
<keyword id="KW-0378">Hydrolase</keyword>
<keyword id="KW-0460">Magnesium</keyword>
<keyword id="KW-0479">Metal-binding</keyword>
<keyword id="KW-0547">Nucleotide-binding</keyword>
<keyword id="KW-1185">Reference proteome</keyword>
<proteinExistence type="inferred from homology"/>